<sequence>MNTTSSKSKKKQDDQVGTRFLGVRRRPWGRYAAEIRDPTTKERHWLGTFDTAEEAALAYDRAARSMRGTRARTNFVYSDMPPSSSVTSIVSPDDPPPPPPPPAPPSNDPVDYMMMFNQYSSTDSPMLQPHCDQVDSYMFGGSQSSNSYCYSNDSSNELPPLPSDLSNSCYSQPQWTWTGDDYSSEYVHSPMFSRMPPVSDSFPQGFNYFGS</sequence>
<evidence type="ECO:0000250" key="1"/>
<evidence type="ECO:0000255" key="2">
    <source>
        <dbReference type="PROSITE-ProRule" id="PRU00366"/>
    </source>
</evidence>
<evidence type="ECO:0000256" key="3">
    <source>
        <dbReference type="SAM" id="MobiDB-lite"/>
    </source>
</evidence>
<evidence type="ECO:0000269" key="4">
    <source>
    </source>
</evidence>
<evidence type="ECO:0000269" key="5">
    <source>
    </source>
</evidence>
<evidence type="ECO:0000269" key="6">
    <source>
    </source>
</evidence>
<evidence type="ECO:0000305" key="7"/>
<organism>
    <name type="scientific">Arabidopsis thaliana</name>
    <name type="common">Mouse-ear cress</name>
    <dbReference type="NCBI Taxonomy" id="3702"/>
    <lineage>
        <taxon>Eukaryota</taxon>
        <taxon>Viridiplantae</taxon>
        <taxon>Streptophyta</taxon>
        <taxon>Embryophyta</taxon>
        <taxon>Tracheophyta</taxon>
        <taxon>Spermatophyta</taxon>
        <taxon>Magnoliopsida</taxon>
        <taxon>eudicotyledons</taxon>
        <taxon>Gunneridae</taxon>
        <taxon>Pentapetalae</taxon>
        <taxon>rosids</taxon>
        <taxon>malvids</taxon>
        <taxon>Brassicales</taxon>
        <taxon>Brassicaceae</taxon>
        <taxon>Camelineae</taxon>
        <taxon>Arabidopsis</taxon>
    </lineage>
</organism>
<dbReference type="EMBL" id="AF216581">
    <property type="protein sequence ID" value="AAF32292.1"/>
    <property type="molecule type" value="Genomic_DNA"/>
</dbReference>
<dbReference type="EMBL" id="AY560852">
    <property type="protein sequence ID" value="AAT44919.1"/>
    <property type="molecule type" value="mRNA"/>
</dbReference>
<dbReference type="EMBL" id="AB005230">
    <property type="protein sequence ID" value="BAB11119.1"/>
    <property type="molecule type" value="Genomic_DNA"/>
</dbReference>
<dbReference type="EMBL" id="CP002688">
    <property type="protein sequence ID" value="AED91958.1"/>
    <property type="molecule type" value="Genomic_DNA"/>
</dbReference>
<dbReference type="EMBL" id="BT024919">
    <property type="protein sequence ID" value="ABD94075.1"/>
    <property type="molecule type" value="mRNA"/>
</dbReference>
<dbReference type="RefSeq" id="NP_196895.1">
    <property type="nucleotide sequence ID" value="NM_121394.2"/>
</dbReference>
<dbReference type="SMR" id="Q9M644"/>
<dbReference type="BioGRID" id="16516">
    <property type="interactions" value="10"/>
</dbReference>
<dbReference type="FunCoup" id="Q9M644">
    <property type="interactions" value="24"/>
</dbReference>
<dbReference type="IntAct" id="Q9M644">
    <property type="interactions" value="11"/>
</dbReference>
<dbReference type="STRING" id="3702.Q9M644"/>
<dbReference type="iPTMnet" id="Q9M644"/>
<dbReference type="PaxDb" id="3702-AT5G13910.1"/>
<dbReference type="ProteomicsDB" id="250754"/>
<dbReference type="EnsemblPlants" id="AT5G13910.1">
    <property type="protein sequence ID" value="AT5G13910.1"/>
    <property type="gene ID" value="AT5G13910"/>
</dbReference>
<dbReference type="GeneID" id="831238"/>
<dbReference type="Gramene" id="AT5G13910.1">
    <property type="protein sequence ID" value="AT5G13910.1"/>
    <property type="gene ID" value="AT5G13910"/>
</dbReference>
<dbReference type="KEGG" id="ath:AT5G13910"/>
<dbReference type="Araport" id="AT5G13910"/>
<dbReference type="TAIR" id="AT5G13910">
    <property type="gene designation" value="LEP"/>
</dbReference>
<dbReference type="eggNOG" id="ENOG502RYDI">
    <property type="taxonomic scope" value="Eukaryota"/>
</dbReference>
<dbReference type="HOGENOM" id="CLU_073466_1_0_1"/>
<dbReference type="InParanoid" id="Q9M644"/>
<dbReference type="OMA" id="MFSRMPP"/>
<dbReference type="OrthoDB" id="780830at2759"/>
<dbReference type="PhylomeDB" id="Q9M644"/>
<dbReference type="PRO" id="PR:Q9M644"/>
<dbReference type="Proteomes" id="UP000006548">
    <property type="component" value="Chromosome 5"/>
</dbReference>
<dbReference type="ExpressionAtlas" id="Q9M644">
    <property type="expression patterns" value="baseline and differential"/>
</dbReference>
<dbReference type="GO" id="GO:0005634">
    <property type="term" value="C:nucleus"/>
    <property type="evidence" value="ECO:0007669"/>
    <property type="project" value="UniProtKB-SubCell"/>
</dbReference>
<dbReference type="GO" id="GO:0003700">
    <property type="term" value="F:DNA-binding transcription factor activity"/>
    <property type="evidence" value="ECO:0000250"/>
    <property type="project" value="TAIR"/>
</dbReference>
<dbReference type="GO" id="GO:0000976">
    <property type="term" value="F:transcription cis-regulatory region binding"/>
    <property type="evidence" value="ECO:0000353"/>
    <property type="project" value="TAIR"/>
</dbReference>
<dbReference type="GO" id="GO:0009873">
    <property type="term" value="P:ethylene-activated signaling pathway"/>
    <property type="evidence" value="ECO:0007669"/>
    <property type="project" value="UniProtKB-KW"/>
</dbReference>
<dbReference type="GO" id="GO:0009740">
    <property type="term" value="P:gibberellic acid mediated signaling pathway"/>
    <property type="evidence" value="ECO:0007669"/>
    <property type="project" value="UniProtKB-KW"/>
</dbReference>
<dbReference type="GO" id="GO:0010030">
    <property type="term" value="P:positive regulation of seed germination"/>
    <property type="evidence" value="ECO:0000315"/>
    <property type="project" value="TAIR"/>
</dbReference>
<dbReference type="GO" id="GO:0009739">
    <property type="term" value="P:response to gibberellin"/>
    <property type="evidence" value="ECO:0000315"/>
    <property type="project" value="TAIR"/>
</dbReference>
<dbReference type="CDD" id="cd00018">
    <property type="entry name" value="AP2"/>
    <property type="match status" value="1"/>
</dbReference>
<dbReference type="FunFam" id="3.30.730.10:FF:000001">
    <property type="entry name" value="Ethylene-responsive transcription factor 2"/>
    <property type="match status" value="1"/>
</dbReference>
<dbReference type="Gene3D" id="3.30.730.10">
    <property type="entry name" value="AP2/ERF domain"/>
    <property type="match status" value="1"/>
</dbReference>
<dbReference type="InterPro" id="IPR001471">
    <property type="entry name" value="AP2/ERF_dom"/>
</dbReference>
<dbReference type="InterPro" id="IPR036955">
    <property type="entry name" value="AP2/ERF_dom_sf"/>
</dbReference>
<dbReference type="InterPro" id="IPR016177">
    <property type="entry name" value="DNA-bd_dom_sf"/>
</dbReference>
<dbReference type="PANTHER" id="PTHR31677">
    <property type="entry name" value="AP2 DOMAIN CLASS TRANSCRIPTION FACTOR"/>
    <property type="match status" value="1"/>
</dbReference>
<dbReference type="PANTHER" id="PTHR31677:SF264">
    <property type="entry name" value="ETHYLENE-RESPONSIVE TRANSCRIPTION FACTOR LEP"/>
    <property type="match status" value="1"/>
</dbReference>
<dbReference type="Pfam" id="PF00847">
    <property type="entry name" value="AP2"/>
    <property type="match status" value="1"/>
</dbReference>
<dbReference type="PRINTS" id="PR00367">
    <property type="entry name" value="ETHRSPELEMNT"/>
</dbReference>
<dbReference type="SMART" id="SM00380">
    <property type="entry name" value="AP2"/>
    <property type="match status" value="1"/>
</dbReference>
<dbReference type="SUPFAM" id="SSF54171">
    <property type="entry name" value="DNA-binding domain"/>
    <property type="match status" value="1"/>
</dbReference>
<dbReference type="PROSITE" id="PS51032">
    <property type="entry name" value="AP2_ERF"/>
    <property type="match status" value="1"/>
</dbReference>
<keyword id="KW-0010">Activator</keyword>
<keyword id="KW-0238">DNA-binding</keyword>
<keyword id="KW-0936">Ethylene signaling pathway</keyword>
<keyword id="KW-0939">Gibberellin signaling pathway</keyword>
<keyword id="KW-0539">Nucleus</keyword>
<keyword id="KW-1185">Reference proteome</keyword>
<keyword id="KW-0804">Transcription</keyword>
<keyword id="KW-0805">Transcription regulation</keyword>
<gene>
    <name type="primary">LEP</name>
    <name type="synonym">ERF085</name>
    <name type="ordered locus">At5g13910</name>
    <name type="ORF">MAC12.13</name>
</gene>
<proteinExistence type="evidence at transcript level"/>
<feature type="chain" id="PRO_0000297929" description="Ethylene-responsive transcription factor LEP">
    <location>
        <begin position="1"/>
        <end position="211"/>
    </location>
</feature>
<feature type="DNA-binding region" description="AP2/ERF" evidence="2">
    <location>
        <begin position="19"/>
        <end position="76"/>
    </location>
</feature>
<feature type="region of interest" description="Disordered" evidence="3">
    <location>
        <begin position="1"/>
        <end position="21"/>
    </location>
</feature>
<feature type="region of interest" description="Disordered" evidence="3">
    <location>
        <begin position="74"/>
        <end position="110"/>
    </location>
</feature>
<feature type="compositionally biased region" description="Low complexity" evidence="3">
    <location>
        <begin position="81"/>
        <end position="92"/>
    </location>
</feature>
<feature type="compositionally biased region" description="Pro residues" evidence="3">
    <location>
        <begin position="93"/>
        <end position="107"/>
    </location>
</feature>
<protein>
    <recommendedName>
        <fullName>Ethylene-responsive transcription factor LEP</fullName>
    </recommendedName>
    <alternativeName>
        <fullName>Protein LEAFY PETIOLE</fullName>
    </alternativeName>
</protein>
<name>LEP_ARATH</name>
<reference key="1">
    <citation type="journal article" date="2000" name="Development">
        <title>Activation tagging of the LEAFY PETIOLE gene affects leaf petiole development in Arabidopsis thaliana.</title>
        <authorList>
            <person name="van der Graaff E."/>
            <person name="Dulk-Ras A.D."/>
            <person name="Hooykaas P.J.J."/>
            <person name="Keller B."/>
        </authorList>
    </citation>
    <scope>NUCLEOTIDE SEQUENCE [GENOMIC DNA]</scope>
    <scope>FUNCTION</scope>
    <scope>TISSUE SPECIFICITY</scope>
    <source>
        <strain>cv. C24</strain>
    </source>
</reference>
<reference key="2">
    <citation type="submission" date="2004-02" db="EMBL/GenBank/DDBJ databases">
        <title>Molecular cloning, expression, phylogenetic and functional characterization of the Arabidopsis AP2/EREBP transcription factor family.</title>
        <authorList>
            <person name="Pan Y."/>
            <person name="Gong W."/>
            <person name="Liu D."/>
            <person name="Fu Q."/>
            <person name="Mei W.-Q."/>
            <person name="Song W.-Q."/>
            <person name="Ma L.-G."/>
            <person name="Luo J.-C."/>
            <person name="Deng X.-W."/>
            <person name="Zhu Y.-X."/>
        </authorList>
    </citation>
    <scope>NUCLEOTIDE SEQUENCE [MRNA]</scope>
</reference>
<reference key="3">
    <citation type="journal article" date="1997" name="DNA Res.">
        <title>Structural analysis of Arabidopsis thaliana chromosome 5. I. Sequence features of the 1.6 Mb regions covered by twenty physically assigned P1 clones.</title>
        <authorList>
            <person name="Sato S."/>
            <person name="Kotani H."/>
            <person name="Nakamura Y."/>
            <person name="Kaneko T."/>
            <person name="Asamizu E."/>
            <person name="Fukami M."/>
            <person name="Miyajima N."/>
            <person name="Tabata S."/>
        </authorList>
    </citation>
    <scope>NUCLEOTIDE SEQUENCE [LARGE SCALE GENOMIC DNA]</scope>
    <source>
        <strain>cv. Columbia</strain>
    </source>
</reference>
<reference key="4">
    <citation type="journal article" date="2017" name="Plant J.">
        <title>Araport11: a complete reannotation of the Arabidopsis thaliana reference genome.</title>
        <authorList>
            <person name="Cheng C.Y."/>
            <person name="Krishnakumar V."/>
            <person name="Chan A.P."/>
            <person name="Thibaud-Nissen F."/>
            <person name="Schobel S."/>
            <person name="Town C.D."/>
        </authorList>
    </citation>
    <scope>GENOME REANNOTATION</scope>
    <source>
        <strain>cv. Columbia</strain>
    </source>
</reference>
<reference key="5">
    <citation type="submission" date="2006-03" db="EMBL/GenBank/DDBJ databases">
        <title>Arabidopsis ORF clones.</title>
        <authorList>
            <person name="Shinn P."/>
            <person name="Chen H."/>
            <person name="Kim C.J."/>
            <person name="Ecker J.R."/>
        </authorList>
    </citation>
    <scope>NUCLEOTIDE SEQUENCE [LARGE SCALE MRNA]</scope>
    <source>
        <strain>cv. Columbia</strain>
    </source>
</reference>
<reference key="6">
    <citation type="journal article" date="2002" name="Plant J.">
        <title>Activation tagging of the two closely linked genes LEP and VAS independently affects vascular cell number.</title>
        <authorList>
            <person name="van der Graaff E."/>
            <person name="Hooykaas P.J.J."/>
            <person name="Keller B."/>
        </authorList>
    </citation>
    <scope>FUNCTION</scope>
    <scope>TISSUE SPECIFICITY</scope>
</reference>
<reference key="7">
    <citation type="journal article" date="2006" name="Plant Cell">
        <title>A new role for the Arabidopsis AP2 transcription factor, LEAFY PETIOLE, in gibberellin-induced germination is revealed by the misexpression of a homologous gene, SOB2/DRN-LIKE.</title>
        <authorList>
            <person name="Ward J.M."/>
            <person name="Smith A.M."/>
            <person name="Shah P.K."/>
            <person name="Galanti S.E."/>
            <person name="Yi H."/>
            <person name="Demianski A.J."/>
            <person name="van der Graaff E."/>
            <person name="Keller B."/>
            <person name="Neff M.M."/>
        </authorList>
    </citation>
    <scope>FUNCTION</scope>
    <scope>TISSUE SPECIFICITY</scope>
    <scope>INDUCTION BY IMBIBITION</scope>
</reference>
<reference key="8">
    <citation type="journal article" date="2006" name="Plant Physiol.">
        <title>Genome-wide analysis of the ERF gene family in Arabidopsis and rice.</title>
        <authorList>
            <person name="Nakano T."/>
            <person name="Suzuki K."/>
            <person name="Fujimura T."/>
            <person name="Shinshi H."/>
        </authorList>
    </citation>
    <scope>GENE FAMILY</scope>
    <scope>NOMENCLATURE</scope>
</reference>
<accession>Q9M644</accession>
<comment type="function">
    <text evidence="1 4 5 6">Cell division-promoting factor involved in leaf blade differentiation, inflorescence branching, as well as in carpel and silique shape. Promotes the number of xylem cells. Positively regulates the gibberellin signaling pathway leading to germination, hypocotyl elongation, and leaf expansion. Probably acts as a transcriptional activator. Binds to the GCC-box pathogenesis-related promoter element. May be involved in the regulation of gene expression by stress factors and by components of stress signal transduction pathways (By similarity).</text>
</comment>
<comment type="subcellular location">
    <subcellularLocation>
        <location evidence="7">Nucleus</location>
    </subcellularLocation>
</comment>
<comment type="tissue specificity">
    <text evidence="4 5 6">Expressed in germinating seeds. Present in young shoots, at low levels, especially in leaf primordia and developing leaf blades. Also detected in vascular tissue, mostly in xylem, of young leaves, petioles and hypocotyls.</text>
</comment>
<comment type="induction">
    <text evidence="6">By imbibition.</text>
</comment>
<comment type="similarity">
    <text evidence="7">Belongs to the AP2/ERF transcription factor family. ERF subfamily.</text>
</comment>